<name>ADIPL_HUMAN</name>
<reference key="1">
    <citation type="journal article" date="2006" name="Nature">
        <title>The DNA sequence and biological annotation of human chromosome 1.</title>
        <authorList>
            <person name="Gregory S.G."/>
            <person name="Barlow K.F."/>
            <person name="McLay K.E."/>
            <person name="Kaul R."/>
            <person name="Swarbreck D."/>
            <person name="Dunham A."/>
            <person name="Scott C.E."/>
            <person name="Howe K.L."/>
            <person name="Woodfine K."/>
            <person name="Spencer C.C.A."/>
            <person name="Jones M.C."/>
            <person name="Gillson C."/>
            <person name="Searle S."/>
            <person name="Zhou Y."/>
            <person name="Kokocinski F."/>
            <person name="McDonald L."/>
            <person name="Evans R."/>
            <person name="Phillips K."/>
            <person name="Atkinson A."/>
            <person name="Cooper R."/>
            <person name="Jones C."/>
            <person name="Hall R.E."/>
            <person name="Andrews T.D."/>
            <person name="Lloyd C."/>
            <person name="Ainscough R."/>
            <person name="Almeida J.P."/>
            <person name="Ambrose K.D."/>
            <person name="Anderson F."/>
            <person name="Andrew R.W."/>
            <person name="Ashwell R.I.S."/>
            <person name="Aubin K."/>
            <person name="Babbage A.K."/>
            <person name="Bagguley C.L."/>
            <person name="Bailey J."/>
            <person name="Beasley H."/>
            <person name="Bethel G."/>
            <person name="Bird C.P."/>
            <person name="Bray-Allen S."/>
            <person name="Brown J.Y."/>
            <person name="Brown A.J."/>
            <person name="Buckley D."/>
            <person name="Burton J."/>
            <person name="Bye J."/>
            <person name="Carder C."/>
            <person name="Chapman J.C."/>
            <person name="Clark S.Y."/>
            <person name="Clarke G."/>
            <person name="Clee C."/>
            <person name="Cobley V."/>
            <person name="Collier R.E."/>
            <person name="Corby N."/>
            <person name="Coville G.J."/>
            <person name="Davies J."/>
            <person name="Deadman R."/>
            <person name="Dunn M."/>
            <person name="Earthrowl M."/>
            <person name="Ellington A.G."/>
            <person name="Errington H."/>
            <person name="Frankish A."/>
            <person name="Frankland J."/>
            <person name="French L."/>
            <person name="Garner P."/>
            <person name="Garnett J."/>
            <person name="Gay L."/>
            <person name="Ghori M.R.J."/>
            <person name="Gibson R."/>
            <person name="Gilby L.M."/>
            <person name="Gillett W."/>
            <person name="Glithero R.J."/>
            <person name="Grafham D.V."/>
            <person name="Griffiths C."/>
            <person name="Griffiths-Jones S."/>
            <person name="Grocock R."/>
            <person name="Hammond S."/>
            <person name="Harrison E.S.I."/>
            <person name="Hart E."/>
            <person name="Haugen E."/>
            <person name="Heath P.D."/>
            <person name="Holmes S."/>
            <person name="Holt K."/>
            <person name="Howden P.J."/>
            <person name="Hunt A.R."/>
            <person name="Hunt S.E."/>
            <person name="Hunter G."/>
            <person name="Isherwood J."/>
            <person name="James R."/>
            <person name="Johnson C."/>
            <person name="Johnson D."/>
            <person name="Joy A."/>
            <person name="Kay M."/>
            <person name="Kershaw J.K."/>
            <person name="Kibukawa M."/>
            <person name="Kimberley A.M."/>
            <person name="King A."/>
            <person name="Knights A.J."/>
            <person name="Lad H."/>
            <person name="Laird G."/>
            <person name="Lawlor S."/>
            <person name="Leongamornlert D.A."/>
            <person name="Lloyd D.M."/>
            <person name="Loveland J."/>
            <person name="Lovell J."/>
            <person name="Lush M.J."/>
            <person name="Lyne R."/>
            <person name="Martin S."/>
            <person name="Mashreghi-Mohammadi M."/>
            <person name="Matthews L."/>
            <person name="Matthews N.S.W."/>
            <person name="McLaren S."/>
            <person name="Milne S."/>
            <person name="Mistry S."/>
            <person name="Moore M.J.F."/>
            <person name="Nickerson T."/>
            <person name="O'Dell C.N."/>
            <person name="Oliver K."/>
            <person name="Palmeiri A."/>
            <person name="Palmer S.A."/>
            <person name="Parker A."/>
            <person name="Patel D."/>
            <person name="Pearce A.V."/>
            <person name="Peck A.I."/>
            <person name="Pelan S."/>
            <person name="Phelps K."/>
            <person name="Phillimore B.J."/>
            <person name="Plumb R."/>
            <person name="Rajan J."/>
            <person name="Raymond C."/>
            <person name="Rouse G."/>
            <person name="Saenphimmachak C."/>
            <person name="Sehra H.K."/>
            <person name="Sheridan E."/>
            <person name="Shownkeen R."/>
            <person name="Sims S."/>
            <person name="Skuce C.D."/>
            <person name="Smith M."/>
            <person name="Steward C."/>
            <person name="Subramanian S."/>
            <person name="Sycamore N."/>
            <person name="Tracey A."/>
            <person name="Tromans A."/>
            <person name="Van Helmond Z."/>
            <person name="Wall M."/>
            <person name="Wallis J.M."/>
            <person name="White S."/>
            <person name="Whitehead S.L."/>
            <person name="Wilkinson J.E."/>
            <person name="Willey D.L."/>
            <person name="Williams H."/>
            <person name="Wilming L."/>
            <person name="Wray P.W."/>
            <person name="Wu Z."/>
            <person name="Coulson A."/>
            <person name="Vaudin M."/>
            <person name="Sulston J.E."/>
            <person name="Durbin R.M."/>
            <person name="Hubbard T."/>
            <person name="Wooster R."/>
            <person name="Dunham I."/>
            <person name="Carter N.P."/>
            <person name="McVean G."/>
            <person name="Ross M.T."/>
            <person name="Harrow J."/>
            <person name="Olson M.V."/>
            <person name="Beck S."/>
            <person name="Rogers J."/>
            <person name="Bentley D.R."/>
        </authorList>
    </citation>
    <scope>NUCLEOTIDE SEQUENCE [LARGE SCALE GENOMIC DNA]</scope>
</reference>
<reference key="2">
    <citation type="journal article" date="2004" name="Genome Res.">
        <title>The status, quality, and expansion of the NIH full-length cDNA project: the Mammalian Gene Collection (MGC).</title>
        <authorList>
            <consortium name="The MGC Project Team"/>
        </authorList>
    </citation>
    <scope>NUCLEOTIDE SEQUENCE [LARGE SCALE MRNA]</scope>
</reference>
<reference key="3">
    <citation type="journal article" date="2012" name="J. Biol. Chem.">
        <title>C1q/TNF-related protein-12 (CTRP12), a novel adipokine that improves insulin sensitivity and glycemic control in mouse models of obesity and diabetes.</title>
        <authorList>
            <person name="Wei Z."/>
            <person name="Peterson J.M."/>
            <person name="Lei X."/>
            <person name="Cebotaru L."/>
            <person name="Wolfgang M.J."/>
            <person name="Baldeviano G.C."/>
            <person name="Wong G.W."/>
        </authorList>
    </citation>
    <scope>PROTEOLYTIC PROCESSING</scope>
    <scope>TISSUE SPECIFICITY</scope>
    <scope>SUBCELLULAR LOCATION</scope>
</reference>
<reference key="4">
    <citation type="journal article" date="2014" name="J. Endocrinol.">
        <title>Insulin regulates the novel adipokine adipolin/CTRP12: in vivo and ex vivo effects.</title>
        <authorList>
            <person name="Tan B.K."/>
            <person name="Lewandowski K.C."/>
            <person name="O'Hare J.P."/>
            <person name="Randeva H.S."/>
        </authorList>
    </citation>
    <scope>SUBCELLULAR LOCATION</scope>
    <scope>INDUCTION</scope>
</reference>
<sequence length="302" mass="32416">MRRWAWAAVVVLLGPQLVLLGGVGARREAQRTQQPGQRADPPNATASASSREGLPEAPKPSQASGPEFSDAHMTWLNFVRRPDDGALRKRCGSRDKKPRDLFGPPGPPGAEVTAETLLHEFQELLKEATERRFSGLLDPLLPQGAGLRLVGEAFHCRLQGPRRVDKRTLVELHGFQAPAAQGAFLRGSGLSLASGRFTAPVSGIFQFSASLHVDHSELQGKARLRARDVVCVLICIESLCQRHTCLEAVSGLESNSRVFTLQVQGLLQLQAGQYASVFVDNGSGAVLTIQAGSSFSGLLLGT</sequence>
<protein>
    <recommendedName>
        <fullName>Adipolin</fullName>
    </recommendedName>
    <alternativeName>
        <fullName>Adipose-derived insulin-sensitizing factor</fullName>
    </alternativeName>
    <alternativeName>
        <fullName evidence="7">C1q and TNF related protein 12</fullName>
    </alternativeName>
    <alternativeName>
        <fullName>Complement C1q tumor necrosis factor-related protein 12</fullName>
    </alternativeName>
    <component>
        <recommendedName>
            <fullName>Adipolin fC1QTNF12</fullName>
        </recommendedName>
        <alternativeName>
            <fullName>Adipolin fCTRP12</fullName>
        </alternativeName>
        <alternativeName>
            <fullName>Adipolin full-length form</fullName>
        </alternativeName>
    </component>
    <component>
        <recommendedName>
            <fullName>Adipolin gC1QTNF12</fullName>
        </recommendedName>
        <alternativeName>
            <fullName>Adipolin cleaved form</fullName>
        </alternativeName>
        <alternativeName>
            <fullName>Adipolin gCTRP12</fullName>
        </alternativeName>
    </component>
</protein>
<evidence type="ECO:0000250" key="1">
    <source>
        <dbReference type="UniProtKB" id="Q8R2Z0"/>
    </source>
</evidence>
<evidence type="ECO:0000255" key="2"/>
<evidence type="ECO:0000255" key="3">
    <source>
        <dbReference type="PROSITE-ProRule" id="PRU00368"/>
    </source>
</evidence>
<evidence type="ECO:0000256" key="4">
    <source>
        <dbReference type="SAM" id="MobiDB-lite"/>
    </source>
</evidence>
<evidence type="ECO:0000269" key="5">
    <source>
    </source>
</evidence>
<evidence type="ECO:0000269" key="6">
    <source>
    </source>
</evidence>
<evidence type="ECO:0000303" key="7">
    <source>
    </source>
</evidence>
<evidence type="ECO:0000305" key="8"/>
<evidence type="ECO:0000312" key="9">
    <source>
        <dbReference type="HGNC" id="HGNC:32308"/>
    </source>
</evidence>
<comment type="function">
    <text evidence="1">Insulin-sensitizing adipocyte-secreted protein (adipokine) that regulates glucose metabolism in liver and adipose tissue. Promotes glucose uptake in adipocytes and suppresses de novo glucose production in hepatocytes via the PI3K-Akt signaling pathway. Administration lead to reduction of blood glucose. Able to attenuate inflammation in fat tissue.</text>
</comment>
<comment type="subunit">
    <text evidence="1">Homomultimer; disulfide-linked. May interact with ERFE (By similarity).</text>
</comment>
<comment type="subcellular location">
    <molecule>Adipolin fC1QTNF12</molecule>
    <subcellularLocation>
        <location evidence="5">Secreted</location>
    </subcellularLocation>
</comment>
<comment type="subcellular location">
    <molecule>Adipolin gC1QTNF12</molecule>
    <subcellularLocation>
        <location evidence="5">Secreted</location>
    </subcellularLocation>
    <text evidence="5">In sera is the predominant form.</text>
</comment>
<comment type="tissue specificity">
    <text evidence="5">Predominantly expressed by adipose tissues.</text>
</comment>
<comment type="induction">
    <text evidence="6">By insulin in subcutaneous adipose tissue.</text>
</comment>
<comment type="PTM">
    <text evidence="1">Processed into Adipolin fC1QTNF12 and Adipolin gC1QTNF12 by FURIN. Insulin enhances endogenous C1QTNF12 cleavage.</text>
</comment>
<comment type="similarity">
    <text evidence="8">Belongs to the adipolin/erythroferrone family.</text>
</comment>
<accession>Q5T7M4</accession>
<accession>Q5EBL5</accession>
<proteinExistence type="evidence at protein level"/>
<keyword id="KW-1015">Disulfide bond</keyword>
<keyword id="KW-0325">Glycoprotein</keyword>
<keyword id="KW-0372">Hormone</keyword>
<keyword id="KW-1267">Proteomics identification</keyword>
<keyword id="KW-1185">Reference proteome</keyword>
<keyword id="KW-0964">Secreted</keyword>
<keyword id="KW-0732">Signal</keyword>
<organism>
    <name type="scientific">Homo sapiens</name>
    <name type="common">Human</name>
    <dbReference type="NCBI Taxonomy" id="9606"/>
    <lineage>
        <taxon>Eukaryota</taxon>
        <taxon>Metazoa</taxon>
        <taxon>Chordata</taxon>
        <taxon>Craniata</taxon>
        <taxon>Vertebrata</taxon>
        <taxon>Euteleostomi</taxon>
        <taxon>Mammalia</taxon>
        <taxon>Eutheria</taxon>
        <taxon>Euarchontoglires</taxon>
        <taxon>Primates</taxon>
        <taxon>Haplorrhini</taxon>
        <taxon>Catarrhini</taxon>
        <taxon>Hominidae</taxon>
        <taxon>Homo</taxon>
    </lineage>
</organism>
<feature type="signal peptide" evidence="2">
    <location>
        <begin position="1"/>
        <end position="20"/>
    </location>
</feature>
<feature type="chain" id="PRO_0000284354" description="Adipolin fC1QTNF12" evidence="1">
    <location>
        <begin position="21"/>
        <end position="302"/>
    </location>
</feature>
<feature type="chain" id="PRO_0000430248" description="Adipolin gC1QTNF12" evidence="1">
    <location>
        <begin position="98"/>
        <end position="302"/>
    </location>
</feature>
<feature type="domain" description="C1q" evidence="3">
    <location>
        <begin position="147"/>
        <end position="302"/>
    </location>
</feature>
<feature type="region of interest" description="Disordered" evidence="4">
    <location>
        <begin position="28"/>
        <end position="68"/>
    </location>
</feature>
<feature type="region of interest" description="Disordered" evidence="4">
    <location>
        <begin position="86"/>
        <end position="110"/>
    </location>
</feature>
<feature type="compositionally biased region" description="Basic and acidic residues" evidence="4">
    <location>
        <begin position="86"/>
        <end position="100"/>
    </location>
</feature>
<feature type="site" description="Cleavage; by FURIN" evidence="1">
    <location>
        <begin position="97"/>
        <end position="98"/>
    </location>
</feature>
<feature type="glycosylation site" description="N-linked (GlcNAc...) asparagine" evidence="2">
    <location>
        <position position="43"/>
    </location>
</feature>
<feature type="sequence variant" id="VAR_054065" description="In dbSNP:rs7539412.">
    <original>G</original>
    <variation>R</variation>
    <location>
        <position position="14"/>
    </location>
</feature>
<gene>
    <name evidence="9" type="primary">C1QTNF12</name>
    <name type="synonym">C1QDC2</name>
    <name type="synonym">CTRP12</name>
    <name evidence="9" type="synonym">FAM132A</name>
</gene>
<dbReference type="EMBL" id="AL162741">
    <property type="status" value="NOT_ANNOTATED_CDS"/>
    <property type="molecule type" value="Genomic_DNA"/>
</dbReference>
<dbReference type="EMBL" id="BC089443">
    <property type="protein sequence ID" value="AAH89443.1"/>
    <property type="molecule type" value="mRNA"/>
</dbReference>
<dbReference type="CCDS" id="CCDS30554.1"/>
<dbReference type="RefSeq" id="NP_001014980.1">
    <property type="nucleotide sequence ID" value="NM_001014980.3"/>
</dbReference>
<dbReference type="FunCoup" id="Q5T7M4">
    <property type="interactions" value="279"/>
</dbReference>
<dbReference type="STRING" id="9606.ENSP00000329137"/>
<dbReference type="GlyCosmos" id="Q5T7M4">
    <property type="glycosylation" value="1 site, No reported glycans"/>
</dbReference>
<dbReference type="GlyGen" id="Q5T7M4">
    <property type="glycosylation" value="2 sites, 1 O-linked glycan (1 site)"/>
</dbReference>
<dbReference type="PhosphoSitePlus" id="Q5T7M4"/>
<dbReference type="BioMuta" id="C1QTNF12"/>
<dbReference type="DMDM" id="145558864"/>
<dbReference type="MassIVE" id="Q5T7M4"/>
<dbReference type="PaxDb" id="9606-ENSP00000329137"/>
<dbReference type="PeptideAtlas" id="Q5T7M4"/>
<dbReference type="ProteomicsDB" id="64664"/>
<dbReference type="Antibodypedia" id="12127">
    <property type="antibodies" value="39 antibodies from 13 providers"/>
</dbReference>
<dbReference type="DNASU" id="388581"/>
<dbReference type="Ensembl" id="ENST00000330388.2">
    <property type="protein sequence ID" value="ENSP00000329137.2"/>
    <property type="gene ID" value="ENSG00000184163.3"/>
</dbReference>
<dbReference type="GeneID" id="388581"/>
<dbReference type="KEGG" id="hsa:388581"/>
<dbReference type="MANE-Select" id="ENST00000330388.2">
    <property type="protein sequence ID" value="ENSP00000329137.2"/>
    <property type="RefSeq nucleotide sequence ID" value="NM_001014980.3"/>
    <property type="RefSeq protein sequence ID" value="NP_001014980.1"/>
</dbReference>
<dbReference type="UCSC" id="uc001adl.3">
    <property type="organism name" value="human"/>
</dbReference>
<dbReference type="AGR" id="HGNC:32308"/>
<dbReference type="CTD" id="388581"/>
<dbReference type="DisGeNET" id="388581"/>
<dbReference type="GeneCards" id="C1QTNF12"/>
<dbReference type="HGNC" id="HGNC:32308">
    <property type="gene designation" value="C1QTNF12"/>
</dbReference>
<dbReference type="HPA" id="ENSG00000184163">
    <property type="expression patterns" value="Tissue enhanced (intestine, skin)"/>
</dbReference>
<dbReference type="MIM" id="616593">
    <property type="type" value="gene"/>
</dbReference>
<dbReference type="neXtProt" id="NX_Q5T7M4"/>
<dbReference type="OpenTargets" id="ENSG00000184163"/>
<dbReference type="PharmGKB" id="PA162386101"/>
<dbReference type="VEuPathDB" id="HostDB:ENSG00000184163"/>
<dbReference type="eggNOG" id="ENOG502QQVR">
    <property type="taxonomic scope" value="Eukaryota"/>
</dbReference>
<dbReference type="GeneTree" id="ENSGT00940000160300"/>
<dbReference type="HOGENOM" id="CLU_057344_1_0_1"/>
<dbReference type="InParanoid" id="Q5T7M4"/>
<dbReference type="OMA" id="RCRGRDK"/>
<dbReference type="OrthoDB" id="6431870at2759"/>
<dbReference type="PAN-GO" id="Q5T7M4">
    <property type="GO annotations" value="5 GO annotations based on evolutionary models"/>
</dbReference>
<dbReference type="PhylomeDB" id="Q5T7M4"/>
<dbReference type="TreeFam" id="TF331282"/>
<dbReference type="PathwayCommons" id="Q5T7M4"/>
<dbReference type="BioGRID-ORCS" id="388581">
    <property type="hits" value="15 hits in 1145 CRISPR screens"/>
</dbReference>
<dbReference type="GenomeRNAi" id="388581"/>
<dbReference type="Pharos" id="Q5T7M4">
    <property type="development level" value="Tbio"/>
</dbReference>
<dbReference type="PRO" id="PR:Q5T7M4"/>
<dbReference type="Proteomes" id="UP000005640">
    <property type="component" value="Chromosome 1"/>
</dbReference>
<dbReference type="RNAct" id="Q5T7M4">
    <property type="molecule type" value="protein"/>
</dbReference>
<dbReference type="Bgee" id="ENSG00000184163">
    <property type="expression patterns" value="Expressed in mucosa of transverse colon and 103 other cell types or tissues"/>
</dbReference>
<dbReference type="GO" id="GO:0005576">
    <property type="term" value="C:extracellular region"/>
    <property type="evidence" value="ECO:0000250"/>
    <property type="project" value="UniProtKB"/>
</dbReference>
<dbReference type="GO" id="GO:0005615">
    <property type="term" value="C:extracellular space"/>
    <property type="evidence" value="ECO:0000318"/>
    <property type="project" value="GO_Central"/>
</dbReference>
<dbReference type="GO" id="GO:0005179">
    <property type="term" value="F:hormone activity"/>
    <property type="evidence" value="ECO:0000250"/>
    <property type="project" value="UniProtKB"/>
</dbReference>
<dbReference type="GO" id="GO:0046323">
    <property type="term" value="P:D-glucose import"/>
    <property type="evidence" value="ECO:0007669"/>
    <property type="project" value="Ensembl"/>
</dbReference>
<dbReference type="GO" id="GO:0051649">
    <property type="term" value="P:establishment of localization in cell"/>
    <property type="evidence" value="ECO:0007669"/>
    <property type="project" value="Ensembl"/>
</dbReference>
<dbReference type="GO" id="GO:0006094">
    <property type="term" value="P:gluconeogenesis"/>
    <property type="evidence" value="ECO:0007669"/>
    <property type="project" value="Ensembl"/>
</dbReference>
<dbReference type="GO" id="GO:0045721">
    <property type="term" value="P:negative regulation of gluconeogenesis"/>
    <property type="evidence" value="ECO:0000318"/>
    <property type="project" value="GO_Central"/>
</dbReference>
<dbReference type="GO" id="GO:0050728">
    <property type="term" value="P:negative regulation of inflammatory response"/>
    <property type="evidence" value="ECO:0007669"/>
    <property type="project" value="Ensembl"/>
</dbReference>
<dbReference type="GO" id="GO:0043491">
    <property type="term" value="P:phosphatidylinositol 3-kinase/protein kinase B signal transduction"/>
    <property type="evidence" value="ECO:0007669"/>
    <property type="project" value="Ensembl"/>
</dbReference>
<dbReference type="GO" id="GO:0046326">
    <property type="term" value="P:positive regulation of D-glucose import"/>
    <property type="evidence" value="ECO:0000318"/>
    <property type="project" value="GO_Central"/>
</dbReference>
<dbReference type="GO" id="GO:0046628">
    <property type="term" value="P:positive regulation of insulin receptor signaling pathway"/>
    <property type="evidence" value="ECO:0000318"/>
    <property type="project" value="GO_Central"/>
</dbReference>
<dbReference type="GO" id="GO:0035774">
    <property type="term" value="P:positive regulation of insulin secretion involved in cellular response to glucose stimulus"/>
    <property type="evidence" value="ECO:0007669"/>
    <property type="project" value="Ensembl"/>
</dbReference>
<dbReference type="GO" id="GO:0051897">
    <property type="term" value="P:positive regulation of phosphatidylinositol 3-kinase/protein kinase B signal transduction"/>
    <property type="evidence" value="ECO:0007669"/>
    <property type="project" value="Ensembl"/>
</dbReference>
<dbReference type="GO" id="GO:0046324">
    <property type="term" value="P:regulation of D-glucose import"/>
    <property type="evidence" value="ECO:0000250"/>
    <property type="project" value="UniProtKB"/>
</dbReference>
<dbReference type="FunFam" id="2.60.120.40:FF:000012">
    <property type="entry name" value="Adipolin isoform X1"/>
    <property type="match status" value="1"/>
</dbReference>
<dbReference type="Gene3D" id="2.60.120.40">
    <property type="match status" value="1"/>
</dbReference>
<dbReference type="InterPro" id="IPR052136">
    <property type="entry name" value="Adipolin/Erythroferrone-rel"/>
</dbReference>
<dbReference type="InterPro" id="IPR001073">
    <property type="entry name" value="C1q_dom"/>
</dbReference>
<dbReference type="InterPro" id="IPR008983">
    <property type="entry name" value="Tumour_necrosis_fac-like_dom"/>
</dbReference>
<dbReference type="PANTHER" id="PTHR24019">
    <property type="entry name" value="ADIPOLIN"/>
    <property type="match status" value="1"/>
</dbReference>
<dbReference type="PANTHER" id="PTHR24019:SF12">
    <property type="entry name" value="ADIPOLIN"/>
    <property type="match status" value="1"/>
</dbReference>
<dbReference type="SUPFAM" id="SSF49842">
    <property type="entry name" value="TNF-like"/>
    <property type="match status" value="1"/>
</dbReference>
<dbReference type="PROSITE" id="PS50871">
    <property type="entry name" value="C1Q"/>
    <property type="match status" value="1"/>
</dbReference>